<proteinExistence type="predicted"/>
<accession>P9WLN6</accession>
<accession>L0T8C0</accession>
<accession>P64917</accession>
<accession>Q10857</accession>
<protein>
    <recommendedName>
        <fullName>Uncharacterized protein MT2056</fullName>
    </recommendedName>
</protein>
<evidence type="ECO:0000305" key="1"/>
<dbReference type="EMBL" id="AE000516">
    <property type="protein sequence ID" value="AAK46333.1"/>
    <property type="status" value="ALT_INIT"/>
    <property type="molecule type" value="Genomic_DNA"/>
</dbReference>
<dbReference type="PIR" id="F70758">
    <property type="entry name" value="F70758"/>
</dbReference>
<dbReference type="RefSeq" id="WP_003410042.1">
    <property type="nucleotide sequence ID" value="NZ_KK341227.1"/>
</dbReference>
<dbReference type="SMR" id="P9WLN6"/>
<dbReference type="KEGG" id="mtc:MT2056"/>
<dbReference type="PATRIC" id="fig|83331.31.peg.2213"/>
<dbReference type="HOGENOM" id="CLU_030357_0_0_11"/>
<dbReference type="Proteomes" id="UP000001020">
    <property type="component" value="Chromosome"/>
</dbReference>
<dbReference type="Gene3D" id="3.50.50.60">
    <property type="entry name" value="FAD/NAD(P)-binding domain"/>
    <property type="match status" value="1"/>
</dbReference>
<dbReference type="InterPro" id="IPR036188">
    <property type="entry name" value="FAD/NAD-bd_sf"/>
</dbReference>
<dbReference type="Pfam" id="PF13450">
    <property type="entry name" value="NAD_binding_8"/>
    <property type="match status" value="1"/>
</dbReference>
<dbReference type="SUPFAM" id="SSF51971">
    <property type="entry name" value="Nucleotide-binding domain"/>
    <property type="match status" value="1"/>
</dbReference>
<organism>
    <name type="scientific">Mycobacterium tuberculosis (strain CDC 1551 / Oshkosh)</name>
    <dbReference type="NCBI Taxonomy" id="83331"/>
    <lineage>
        <taxon>Bacteria</taxon>
        <taxon>Bacillati</taxon>
        <taxon>Actinomycetota</taxon>
        <taxon>Actinomycetes</taxon>
        <taxon>Mycobacteriales</taxon>
        <taxon>Mycobacteriaceae</taxon>
        <taxon>Mycobacterium</taxon>
        <taxon>Mycobacterium tuberculosis complex</taxon>
    </lineage>
</organism>
<comment type="sequence caution" evidence="1">
    <conflict type="erroneous initiation">
        <sequence resource="EMBL-CDS" id="AAK46333"/>
    </conflict>
</comment>
<keyword id="KW-1185">Reference proteome</keyword>
<name>Y2000_MYCTO</name>
<reference key="1">
    <citation type="journal article" date="2002" name="J. Bacteriol.">
        <title>Whole-genome comparison of Mycobacterium tuberculosis clinical and laboratory strains.</title>
        <authorList>
            <person name="Fleischmann R.D."/>
            <person name="Alland D."/>
            <person name="Eisen J.A."/>
            <person name="Carpenter L."/>
            <person name="White O."/>
            <person name="Peterson J.D."/>
            <person name="DeBoy R.T."/>
            <person name="Dodson R.J."/>
            <person name="Gwinn M.L."/>
            <person name="Haft D.H."/>
            <person name="Hickey E.K."/>
            <person name="Kolonay J.F."/>
            <person name="Nelson W.C."/>
            <person name="Umayam L.A."/>
            <person name="Ermolaeva M.D."/>
            <person name="Salzberg S.L."/>
            <person name="Delcher A."/>
            <person name="Utterback T.R."/>
            <person name="Weidman J.F."/>
            <person name="Khouri H.M."/>
            <person name="Gill J."/>
            <person name="Mikula A."/>
            <person name="Bishai W."/>
            <person name="Jacobs W.R. Jr."/>
            <person name="Venter J.C."/>
            <person name="Fraser C.M."/>
        </authorList>
    </citation>
    <scope>NUCLEOTIDE SEQUENCE [LARGE SCALE GENOMIC DNA]</scope>
    <source>
        <strain>CDC 1551 / Oshkosh</strain>
    </source>
</reference>
<gene>
    <name type="ordered locus">MT2056</name>
</gene>
<feature type="chain" id="PRO_0000427447" description="Uncharacterized protein MT2056">
    <location>
        <begin position="1"/>
        <end position="537"/>
    </location>
</feature>
<sequence length="537" mass="59895">MRPGFVGLGFGQWPVYVVRWPKLHLTPRQRKRVLHRRRLLTDRPISLSQIPIRTGGPMNDPWPRPTQGPAKTIETDYLVIGAGAMGMAFTDTLITESGARVVMIDRACQPGGHWTTAYPFVRLHQPSAYYGVNSRALGNNTIDLVGWNQGLNELAPVGEICAYFDAVLQQQLLPTGRVDYFPMSEYLGDGRFRTLAGTEYVVTVNRRIVDATYLRAVVPSMRPAPYSVAPGVDCVAPNELPKLGTRDRYVVVGAGKTGMDVCLWLLRNDVCPDKLTWIMPRDSWLIDRATLQPGPTFVRQFRESYGATLEAIGAATSTDDLFDRLETAGTLLRIDPSVRPSMYRCATVSHLELEQLRRIRDIVRMGHVQRIEPTTIVLDGGSVPATPTALYIDCTADGAPQRPAKPVFDADHLTLQAVRGCQQVFSAAFIAHVEFAYEDDAVKNELCTPIPHPDCDLDWMRLMHSDLGNFQRWLNDPDLTDWLSSARLNLLADLLPPLSHKPRVRERVVSMFQKRLGTAGDQLAKLLDAATATTEQR</sequence>